<organism>
    <name type="scientific">Saccharolobus islandicus (strain Y.G.57.14 / Yellowstone #1)</name>
    <name type="common">Sulfolobus islandicus</name>
    <dbReference type="NCBI Taxonomy" id="439386"/>
    <lineage>
        <taxon>Archaea</taxon>
        <taxon>Thermoproteota</taxon>
        <taxon>Thermoprotei</taxon>
        <taxon>Sulfolobales</taxon>
        <taxon>Sulfolobaceae</taxon>
        <taxon>Saccharolobus</taxon>
    </lineage>
</organism>
<gene>
    <name evidence="1" type="primary">amzA</name>
    <name type="ordered locus">YG5714_1446</name>
</gene>
<sequence>MTEMKILIVTLTYIEKSIIDEIVNNLSSYGLEVDILFDSRKYLPISAFNWERLQYDAEKVLSFLKSKYDFNYDSIIFLADSDGYIDGYNFVFGLTIDNFAIIFLNRLREEFYNRKPDLELFMKRVVKEVTHEAGHTLGLGHCNTIGCVMNFSNTVEDVDKKQARFCKNCIYKIENLSKYLQRK</sequence>
<accession>C3NEH4</accession>
<feature type="chain" id="PRO_1000216101" description="Archaemetzincin">
    <location>
        <begin position="1"/>
        <end position="183"/>
    </location>
</feature>
<feature type="active site" description="Proton acceptor" evidence="1">
    <location>
        <position position="132"/>
    </location>
</feature>
<feature type="binding site" evidence="1">
    <location>
        <position position="131"/>
    </location>
    <ligand>
        <name>Zn(2+)</name>
        <dbReference type="ChEBI" id="CHEBI:29105"/>
        <label>1</label>
        <note>catalytic</note>
    </ligand>
</feature>
<feature type="binding site" evidence="1">
    <location>
        <position position="135"/>
    </location>
    <ligand>
        <name>Zn(2+)</name>
        <dbReference type="ChEBI" id="CHEBI:29105"/>
        <label>1</label>
        <note>catalytic</note>
    </ligand>
</feature>
<feature type="binding site" evidence="1">
    <location>
        <position position="141"/>
    </location>
    <ligand>
        <name>Zn(2+)</name>
        <dbReference type="ChEBI" id="CHEBI:29105"/>
        <label>1</label>
        <note>catalytic</note>
    </ligand>
</feature>
<feature type="binding site" evidence="1">
    <location>
        <position position="142"/>
    </location>
    <ligand>
        <name>Zn(2+)</name>
        <dbReference type="ChEBI" id="CHEBI:29105"/>
        <label>2</label>
    </ligand>
</feature>
<feature type="binding site" evidence="1">
    <location>
        <position position="147"/>
    </location>
    <ligand>
        <name>Zn(2+)</name>
        <dbReference type="ChEBI" id="CHEBI:29105"/>
        <label>2</label>
    </ligand>
</feature>
<feature type="binding site" evidence="1">
    <location>
        <position position="166"/>
    </location>
    <ligand>
        <name>Zn(2+)</name>
        <dbReference type="ChEBI" id="CHEBI:29105"/>
        <label>2</label>
    </ligand>
</feature>
<feature type="binding site" evidence="1">
    <location>
        <position position="169"/>
    </location>
    <ligand>
        <name>Zn(2+)</name>
        <dbReference type="ChEBI" id="CHEBI:29105"/>
        <label>2</label>
    </ligand>
</feature>
<protein>
    <recommendedName>
        <fullName evidence="1">Archaemetzincin</fullName>
        <ecNumber evidence="1">3.4.-.-</ecNumber>
    </recommendedName>
</protein>
<comment type="function">
    <text evidence="1">Probable zinc metalloprotease whose natural substrate is unknown.</text>
</comment>
<comment type="cofactor">
    <cofactor evidence="1">
        <name>Zn(2+)</name>
        <dbReference type="ChEBI" id="CHEBI:29105"/>
    </cofactor>
    <text evidence="1">Binds 2 Zn(2+) ions per subunit. One is catalytic, whereas the other seems to have a structural role.</text>
</comment>
<comment type="subunit">
    <text evidence="1">Monomer.</text>
</comment>
<comment type="similarity">
    <text evidence="1">Belongs to the peptidase M54 family.</text>
</comment>
<evidence type="ECO:0000255" key="1">
    <source>
        <dbReference type="HAMAP-Rule" id="MF_01842"/>
    </source>
</evidence>
<proteinExistence type="inferred from homology"/>
<keyword id="KW-0378">Hydrolase</keyword>
<keyword id="KW-0479">Metal-binding</keyword>
<keyword id="KW-0482">Metalloprotease</keyword>
<keyword id="KW-0645">Protease</keyword>
<keyword id="KW-0862">Zinc</keyword>
<name>AMZA_SACI7</name>
<dbReference type="EC" id="3.4.-.-" evidence="1"/>
<dbReference type="EMBL" id="CP001403">
    <property type="protein sequence ID" value="ACP45713.1"/>
    <property type="molecule type" value="Genomic_DNA"/>
</dbReference>
<dbReference type="RefSeq" id="WP_012711449.1">
    <property type="nucleotide sequence ID" value="NC_012622.1"/>
</dbReference>
<dbReference type="SMR" id="C3NEH4"/>
<dbReference type="KEGG" id="siy:YG5714_1446"/>
<dbReference type="HOGENOM" id="CLU_108521_2_0_2"/>
<dbReference type="Proteomes" id="UP000002308">
    <property type="component" value="Chromosome"/>
</dbReference>
<dbReference type="GO" id="GO:0008237">
    <property type="term" value="F:metallopeptidase activity"/>
    <property type="evidence" value="ECO:0007669"/>
    <property type="project" value="UniProtKB-UniRule"/>
</dbReference>
<dbReference type="GO" id="GO:0008270">
    <property type="term" value="F:zinc ion binding"/>
    <property type="evidence" value="ECO:0007669"/>
    <property type="project" value="UniProtKB-UniRule"/>
</dbReference>
<dbReference type="GO" id="GO:0006508">
    <property type="term" value="P:proteolysis"/>
    <property type="evidence" value="ECO:0007669"/>
    <property type="project" value="UniProtKB-UniRule"/>
</dbReference>
<dbReference type="CDD" id="cd11375">
    <property type="entry name" value="Peptidase_M54"/>
    <property type="match status" value="1"/>
</dbReference>
<dbReference type="Gene3D" id="3.40.390.10">
    <property type="entry name" value="Collagenase (Catalytic Domain)"/>
    <property type="match status" value="1"/>
</dbReference>
<dbReference type="HAMAP" id="MF_01842">
    <property type="entry name" value="Archaemetzincin"/>
    <property type="match status" value="1"/>
</dbReference>
<dbReference type="InterPro" id="IPR024079">
    <property type="entry name" value="MetalloPept_cat_dom_sf"/>
</dbReference>
<dbReference type="InterPro" id="IPR012962">
    <property type="entry name" value="Pept_M54_archaemetzincn"/>
</dbReference>
<dbReference type="InterPro" id="IPR012091">
    <property type="entry name" value="Pept_M54_archaemetzncn_arc/bac"/>
</dbReference>
<dbReference type="NCBIfam" id="NF033823">
    <property type="entry name" value="archmetzin"/>
    <property type="match status" value="1"/>
</dbReference>
<dbReference type="PANTHER" id="PTHR15910">
    <property type="entry name" value="ARCHAEMETZINCIN"/>
    <property type="match status" value="1"/>
</dbReference>
<dbReference type="PANTHER" id="PTHR15910:SF1">
    <property type="entry name" value="ARCHAEMETZINCIN-2"/>
    <property type="match status" value="1"/>
</dbReference>
<dbReference type="Pfam" id="PF07998">
    <property type="entry name" value="Peptidase_M54"/>
    <property type="match status" value="1"/>
</dbReference>
<dbReference type="PIRSF" id="PIRSF005785">
    <property type="entry name" value="Zn-prot_arch"/>
    <property type="match status" value="1"/>
</dbReference>
<dbReference type="SUPFAM" id="SSF55486">
    <property type="entry name" value="Metalloproteases ('zincins'), catalytic domain"/>
    <property type="match status" value="1"/>
</dbReference>
<reference key="1">
    <citation type="journal article" date="2009" name="Proc. Natl. Acad. Sci. U.S.A.">
        <title>Biogeography of the Sulfolobus islandicus pan-genome.</title>
        <authorList>
            <person name="Reno M.L."/>
            <person name="Held N.L."/>
            <person name="Fields C.J."/>
            <person name="Burke P.V."/>
            <person name="Whitaker R.J."/>
        </authorList>
    </citation>
    <scope>NUCLEOTIDE SEQUENCE [LARGE SCALE GENOMIC DNA]</scope>
    <source>
        <strain>Y.G.57.14 / Yellowstone #1</strain>
    </source>
</reference>